<feature type="chain" id="PRO_1000079313" description="ATP-dependent 6-phosphofructokinase">
    <location>
        <begin position="1"/>
        <end position="322"/>
    </location>
</feature>
<feature type="active site" description="Proton acceptor" evidence="1">
    <location>
        <position position="129"/>
    </location>
</feature>
<feature type="binding site" evidence="1">
    <location>
        <position position="11"/>
    </location>
    <ligand>
        <name>ATP</name>
        <dbReference type="ChEBI" id="CHEBI:30616"/>
    </ligand>
</feature>
<feature type="binding site" evidence="1">
    <location>
        <begin position="21"/>
        <end position="25"/>
    </location>
    <ligand>
        <name>ADP</name>
        <dbReference type="ChEBI" id="CHEBI:456216"/>
        <note>allosteric activator; ligand shared between dimeric partners</note>
    </ligand>
</feature>
<feature type="binding site" evidence="1">
    <location>
        <begin position="72"/>
        <end position="73"/>
    </location>
    <ligand>
        <name>ATP</name>
        <dbReference type="ChEBI" id="CHEBI:30616"/>
    </ligand>
</feature>
<feature type="binding site" evidence="1">
    <location>
        <begin position="102"/>
        <end position="105"/>
    </location>
    <ligand>
        <name>ATP</name>
        <dbReference type="ChEBI" id="CHEBI:30616"/>
    </ligand>
</feature>
<feature type="binding site" evidence="1">
    <location>
        <position position="103"/>
    </location>
    <ligand>
        <name>Mg(2+)</name>
        <dbReference type="ChEBI" id="CHEBI:18420"/>
        <note>catalytic</note>
    </ligand>
</feature>
<feature type="binding site" description="in other chain" evidence="1">
    <location>
        <begin position="127"/>
        <end position="129"/>
    </location>
    <ligand>
        <name>substrate</name>
        <note>ligand shared between dimeric partners</note>
    </ligand>
</feature>
<feature type="binding site" description="in other chain" evidence="1">
    <location>
        <position position="156"/>
    </location>
    <ligand>
        <name>ADP</name>
        <dbReference type="ChEBI" id="CHEBI:456216"/>
        <note>allosteric activator; ligand shared between dimeric partners</note>
    </ligand>
</feature>
<feature type="binding site" evidence="1">
    <location>
        <position position="164"/>
    </location>
    <ligand>
        <name>substrate</name>
        <note>ligand shared between dimeric partners</note>
    </ligand>
</feature>
<feature type="binding site" description="in other chain" evidence="1">
    <location>
        <begin position="171"/>
        <end position="173"/>
    </location>
    <ligand>
        <name>substrate</name>
        <note>ligand shared between dimeric partners</note>
    </ligand>
</feature>
<feature type="binding site" description="in other chain" evidence="1">
    <location>
        <begin position="187"/>
        <end position="189"/>
    </location>
    <ligand>
        <name>ADP</name>
        <dbReference type="ChEBI" id="CHEBI:456216"/>
        <note>allosteric activator; ligand shared between dimeric partners</note>
    </ligand>
</feature>
<feature type="binding site" description="in other chain" evidence="1">
    <location>
        <position position="213"/>
    </location>
    <ligand>
        <name>ADP</name>
        <dbReference type="ChEBI" id="CHEBI:456216"/>
        <note>allosteric activator; ligand shared between dimeric partners</note>
    </ligand>
</feature>
<feature type="binding site" description="in other chain" evidence="1">
    <location>
        <begin position="215"/>
        <end position="217"/>
    </location>
    <ligand>
        <name>ADP</name>
        <dbReference type="ChEBI" id="CHEBI:456216"/>
        <note>allosteric activator; ligand shared between dimeric partners</note>
    </ligand>
</feature>
<feature type="binding site" description="in other chain" evidence="1">
    <location>
        <position position="224"/>
    </location>
    <ligand>
        <name>substrate</name>
        <note>ligand shared between dimeric partners</note>
    </ligand>
</feature>
<feature type="binding site" evidence="1">
    <location>
        <position position="245"/>
    </location>
    <ligand>
        <name>substrate</name>
        <note>ligand shared between dimeric partners</note>
    </ligand>
</feature>
<feature type="binding site" description="in other chain" evidence="1">
    <location>
        <begin position="251"/>
        <end position="254"/>
    </location>
    <ligand>
        <name>substrate</name>
        <note>ligand shared between dimeric partners</note>
    </ligand>
</feature>
<sequence length="322" mass="34840">MKKIAVLTSGGDSPGMNAAVRAVVRTAIYNEIEVYGVYHGYQGLLNDDIHKLELGSVGDTIQRGGTFLYSARCPEFKEQEVRKVAIENLRKRGIEGLVVIGGDGSYRGAQRISEECKEIQTIGIPGTIDNDINGTDFTIGFDTALNTIIGLVDKIRDTASSHARTFIIEAMGRDCGDLALWAGLSVGAETIVVPEVKTDIKEIADKIEQGIKRGKKHSIVLVAEGCMTAQDCQKELSQYINVDNRVSVLGHVQRGGSPTGADRVLASRLGGYAVDLLMQGETAKGVGIKNNKIVATSFDEIFDGKDHKFDYSLYELANKLSI</sequence>
<accession>A6U2G5</accession>
<name>PFKA_STAA2</name>
<evidence type="ECO:0000255" key="1">
    <source>
        <dbReference type="HAMAP-Rule" id="MF_00339"/>
    </source>
</evidence>
<gene>
    <name evidence="1" type="primary">pfkA</name>
    <name type="ordered locus">SaurJH1_1789</name>
</gene>
<reference key="1">
    <citation type="submission" date="2007-06" db="EMBL/GenBank/DDBJ databases">
        <title>Complete sequence of chromosome of Staphylococcus aureus subsp. aureus JH1.</title>
        <authorList>
            <consortium name="US DOE Joint Genome Institute"/>
            <person name="Copeland A."/>
            <person name="Lucas S."/>
            <person name="Lapidus A."/>
            <person name="Barry K."/>
            <person name="Detter J.C."/>
            <person name="Glavina del Rio T."/>
            <person name="Hammon N."/>
            <person name="Israni S."/>
            <person name="Dalin E."/>
            <person name="Tice H."/>
            <person name="Pitluck S."/>
            <person name="Chain P."/>
            <person name="Malfatti S."/>
            <person name="Shin M."/>
            <person name="Vergez L."/>
            <person name="Schmutz J."/>
            <person name="Larimer F."/>
            <person name="Land M."/>
            <person name="Hauser L."/>
            <person name="Kyrpides N."/>
            <person name="Ivanova N."/>
            <person name="Tomasz A."/>
            <person name="Richardson P."/>
        </authorList>
    </citation>
    <scope>NUCLEOTIDE SEQUENCE [LARGE SCALE GENOMIC DNA]</scope>
    <source>
        <strain>JH1</strain>
    </source>
</reference>
<keyword id="KW-0021">Allosteric enzyme</keyword>
<keyword id="KW-0067">ATP-binding</keyword>
<keyword id="KW-0963">Cytoplasm</keyword>
<keyword id="KW-0324">Glycolysis</keyword>
<keyword id="KW-0418">Kinase</keyword>
<keyword id="KW-0460">Magnesium</keyword>
<keyword id="KW-0479">Metal-binding</keyword>
<keyword id="KW-0547">Nucleotide-binding</keyword>
<keyword id="KW-0808">Transferase</keyword>
<comment type="function">
    <text evidence="1">Catalyzes the phosphorylation of D-fructose 6-phosphate to fructose 1,6-bisphosphate by ATP, the first committing step of glycolysis.</text>
</comment>
<comment type="catalytic activity">
    <reaction evidence="1">
        <text>beta-D-fructose 6-phosphate + ATP = beta-D-fructose 1,6-bisphosphate + ADP + H(+)</text>
        <dbReference type="Rhea" id="RHEA:16109"/>
        <dbReference type="ChEBI" id="CHEBI:15378"/>
        <dbReference type="ChEBI" id="CHEBI:30616"/>
        <dbReference type="ChEBI" id="CHEBI:32966"/>
        <dbReference type="ChEBI" id="CHEBI:57634"/>
        <dbReference type="ChEBI" id="CHEBI:456216"/>
        <dbReference type="EC" id="2.7.1.11"/>
    </reaction>
</comment>
<comment type="cofactor">
    <cofactor evidence="1">
        <name>Mg(2+)</name>
        <dbReference type="ChEBI" id="CHEBI:18420"/>
    </cofactor>
</comment>
<comment type="activity regulation">
    <text evidence="1">Allosterically activated by ADP and other diphosphonucleosides, and allosterically inhibited by phosphoenolpyruvate.</text>
</comment>
<comment type="pathway">
    <text evidence="1">Carbohydrate degradation; glycolysis; D-glyceraldehyde 3-phosphate and glycerone phosphate from D-glucose: step 3/4.</text>
</comment>
<comment type="subunit">
    <text evidence="1">Homotetramer.</text>
</comment>
<comment type="subcellular location">
    <subcellularLocation>
        <location evidence="1">Cytoplasm</location>
    </subcellularLocation>
</comment>
<comment type="similarity">
    <text evidence="1">Belongs to the phosphofructokinase type A (PFKA) family. ATP-dependent PFK group I subfamily. Prokaryotic clade 'B1' sub-subfamily.</text>
</comment>
<protein>
    <recommendedName>
        <fullName evidence="1">ATP-dependent 6-phosphofructokinase</fullName>
        <shortName evidence="1">ATP-PFK</shortName>
        <shortName evidence="1">Phosphofructokinase</shortName>
        <ecNumber evidence="1">2.7.1.11</ecNumber>
    </recommendedName>
    <alternativeName>
        <fullName evidence="1">Phosphohexokinase</fullName>
    </alternativeName>
</protein>
<proteinExistence type="inferred from homology"/>
<organism>
    <name type="scientific">Staphylococcus aureus (strain JH1)</name>
    <dbReference type="NCBI Taxonomy" id="359787"/>
    <lineage>
        <taxon>Bacteria</taxon>
        <taxon>Bacillati</taxon>
        <taxon>Bacillota</taxon>
        <taxon>Bacilli</taxon>
        <taxon>Bacillales</taxon>
        <taxon>Staphylococcaceae</taxon>
        <taxon>Staphylococcus</taxon>
    </lineage>
</organism>
<dbReference type="EC" id="2.7.1.11" evidence="1"/>
<dbReference type="EMBL" id="CP000736">
    <property type="protein sequence ID" value="ABR52633.1"/>
    <property type="molecule type" value="Genomic_DNA"/>
</dbReference>
<dbReference type="SMR" id="A6U2G5"/>
<dbReference type="KEGG" id="sah:SaurJH1_1789"/>
<dbReference type="HOGENOM" id="CLU_020655_0_1_9"/>
<dbReference type="UniPathway" id="UPA00109">
    <property type="reaction ID" value="UER00182"/>
</dbReference>
<dbReference type="GO" id="GO:0005945">
    <property type="term" value="C:6-phosphofructokinase complex"/>
    <property type="evidence" value="ECO:0007669"/>
    <property type="project" value="TreeGrafter"/>
</dbReference>
<dbReference type="GO" id="GO:0003872">
    <property type="term" value="F:6-phosphofructokinase activity"/>
    <property type="evidence" value="ECO:0007669"/>
    <property type="project" value="UniProtKB-UniRule"/>
</dbReference>
<dbReference type="GO" id="GO:0016208">
    <property type="term" value="F:AMP binding"/>
    <property type="evidence" value="ECO:0007669"/>
    <property type="project" value="TreeGrafter"/>
</dbReference>
<dbReference type="GO" id="GO:0005524">
    <property type="term" value="F:ATP binding"/>
    <property type="evidence" value="ECO:0007669"/>
    <property type="project" value="UniProtKB-KW"/>
</dbReference>
<dbReference type="GO" id="GO:0070095">
    <property type="term" value="F:fructose-6-phosphate binding"/>
    <property type="evidence" value="ECO:0007669"/>
    <property type="project" value="TreeGrafter"/>
</dbReference>
<dbReference type="GO" id="GO:0042802">
    <property type="term" value="F:identical protein binding"/>
    <property type="evidence" value="ECO:0007669"/>
    <property type="project" value="TreeGrafter"/>
</dbReference>
<dbReference type="GO" id="GO:0046872">
    <property type="term" value="F:metal ion binding"/>
    <property type="evidence" value="ECO:0007669"/>
    <property type="project" value="UniProtKB-KW"/>
</dbReference>
<dbReference type="GO" id="GO:0048029">
    <property type="term" value="F:monosaccharide binding"/>
    <property type="evidence" value="ECO:0007669"/>
    <property type="project" value="TreeGrafter"/>
</dbReference>
<dbReference type="GO" id="GO:0061621">
    <property type="term" value="P:canonical glycolysis"/>
    <property type="evidence" value="ECO:0007669"/>
    <property type="project" value="TreeGrafter"/>
</dbReference>
<dbReference type="GO" id="GO:0030388">
    <property type="term" value="P:fructose 1,6-bisphosphate metabolic process"/>
    <property type="evidence" value="ECO:0007669"/>
    <property type="project" value="TreeGrafter"/>
</dbReference>
<dbReference type="GO" id="GO:0006002">
    <property type="term" value="P:fructose 6-phosphate metabolic process"/>
    <property type="evidence" value="ECO:0007669"/>
    <property type="project" value="InterPro"/>
</dbReference>
<dbReference type="FunFam" id="3.40.50.450:FF:000001">
    <property type="entry name" value="ATP-dependent 6-phosphofructokinase"/>
    <property type="match status" value="1"/>
</dbReference>
<dbReference type="FunFam" id="3.40.50.460:FF:000002">
    <property type="entry name" value="ATP-dependent 6-phosphofructokinase"/>
    <property type="match status" value="1"/>
</dbReference>
<dbReference type="Gene3D" id="3.40.50.450">
    <property type="match status" value="1"/>
</dbReference>
<dbReference type="Gene3D" id="3.40.50.460">
    <property type="entry name" value="Phosphofructokinase domain"/>
    <property type="match status" value="1"/>
</dbReference>
<dbReference type="HAMAP" id="MF_00339">
    <property type="entry name" value="Phosphofructokinase_I_B1"/>
    <property type="match status" value="1"/>
</dbReference>
<dbReference type="InterPro" id="IPR022953">
    <property type="entry name" value="ATP_PFK"/>
</dbReference>
<dbReference type="InterPro" id="IPR012003">
    <property type="entry name" value="ATP_PFK_prok-type"/>
</dbReference>
<dbReference type="InterPro" id="IPR012828">
    <property type="entry name" value="PFKA_ATP_prok"/>
</dbReference>
<dbReference type="InterPro" id="IPR015912">
    <property type="entry name" value="Phosphofructokinase_CS"/>
</dbReference>
<dbReference type="InterPro" id="IPR000023">
    <property type="entry name" value="Phosphofructokinase_dom"/>
</dbReference>
<dbReference type="InterPro" id="IPR035966">
    <property type="entry name" value="PKF_sf"/>
</dbReference>
<dbReference type="NCBIfam" id="TIGR02482">
    <property type="entry name" value="PFKA_ATP"/>
    <property type="match status" value="1"/>
</dbReference>
<dbReference type="NCBIfam" id="NF002872">
    <property type="entry name" value="PRK03202.1"/>
    <property type="match status" value="1"/>
</dbReference>
<dbReference type="PANTHER" id="PTHR13697:SF4">
    <property type="entry name" value="ATP-DEPENDENT 6-PHOSPHOFRUCTOKINASE"/>
    <property type="match status" value="1"/>
</dbReference>
<dbReference type="PANTHER" id="PTHR13697">
    <property type="entry name" value="PHOSPHOFRUCTOKINASE"/>
    <property type="match status" value="1"/>
</dbReference>
<dbReference type="Pfam" id="PF00365">
    <property type="entry name" value="PFK"/>
    <property type="match status" value="1"/>
</dbReference>
<dbReference type="PIRSF" id="PIRSF000532">
    <property type="entry name" value="ATP_PFK_prok"/>
    <property type="match status" value="1"/>
</dbReference>
<dbReference type="PRINTS" id="PR00476">
    <property type="entry name" value="PHFRCTKINASE"/>
</dbReference>
<dbReference type="SUPFAM" id="SSF53784">
    <property type="entry name" value="Phosphofructokinase"/>
    <property type="match status" value="1"/>
</dbReference>
<dbReference type="PROSITE" id="PS00433">
    <property type="entry name" value="PHOSPHOFRUCTOKINASE"/>
    <property type="match status" value="1"/>
</dbReference>